<sequence length="147" mass="16974">MTKKTKPESYAFSQNFPISADKARRVIDRIRGRSYEETLIILELLPYRAAYPILKFVCFAASNASSTSTSKKENLFISKAEVNERPAIKKLKPRARGRSFPIKKATCHITIVLTDLSFYFNELVEPQQEKNLLTKLYLNLRGLWDKK</sequence>
<dbReference type="EMBL" id="EU189133">
    <property type="protein sequence ID" value="ABW20596.1"/>
    <property type="molecule type" value="Genomic_DNA"/>
</dbReference>
<dbReference type="RefSeq" id="YP_001531251.1">
    <property type="nucleotide sequence ID" value="NC_009949.1"/>
</dbReference>
<dbReference type="SMR" id="A8W3M1"/>
<dbReference type="GeneID" id="5714798"/>
<dbReference type="GO" id="GO:0015934">
    <property type="term" value="C:large ribosomal subunit"/>
    <property type="evidence" value="ECO:0007669"/>
    <property type="project" value="InterPro"/>
</dbReference>
<dbReference type="GO" id="GO:0009536">
    <property type="term" value="C:plastid"/>
    <property type="evidence" value="ECO:0007669"/>
    <property type="project" value="UniProtKB-SubCell"/>
</dbReference>
<dbReference type="GO" id="GO:0019843">
    <property type="term" value="F:rRNA binding"/>
    <property type="evidence" value="ECO:0007669"/>
    <property type="project" value="UniProtKB-KW"/>
</dbReference>
<dbReference type="GO" id="GO:0003735">
    <property type="term" value="F:structural constituent of ribosome"/>
    <property type="evidence" value="ECO:0007669"/>
    <property type="project" value="InterPro"/>
</dbReference>
<dbReference type="GO" id="GO:0006412">
    <property type="term" value="P:translation"/>
    <property type="evidence" value="ECO:0007669"/>
    <property type="project" value="InterPro"/>
</dbReference>
<dbReference type="CDD" id="cd00336">
    <property type="entry name" value="Ribosomal_L22"/>
    <property type="match status" value="1"/>
</dbReference>
<dbReference type="Gene3D" id="3.90.470.10">
    <property type="entry name" value="Ribosomal protein L22/L17"/>
    <property type="match status" value="1"/>
</dbReference>
<dbReference type="HAMAP" id="MF_01331_B">
    <property type="entry name" value="Ribosomal_uL22_B"/>
    <property type="match status" value="1"/>
</dbReference>
<dbReference type="InterPro" id="IPR001063">
    <property type="entry name" value="Ribosomal_uL22"/>
</dbReference>
<dbReference type="InterPro" id="IPR005727">
    <property type="entry name" value="Ribosomal_uL22_bac/chlpt-type"/>
</dbReference>
<dbReference type="InterPro" id="IPR047867">
    <property type="entry name" value="Ribosomal_uL22_bac/org-type"/>
</dbReference>
<dbReference type="InterPro" id="IPR018260">
    <property type="entry name" value="Ribosomal_uL22_CS"/>
</dbReference>
<dbReference type="InterPro" id="IPR036394">
    <property type="entry name" value="Ribosomal_uL22_sf"/>
</dbReference>
<dbReference type="NCBIfam" id="TIGR01044">
    <property type="entry name" value="rplV_bact"/>
    <property type="match status" value="1"/>
</dbReference>
<dbReference type="PANTHER" id="PTHR13501">
    <property type="entry name" value="CHLOROPLAST 50S RIBOSOMAL PROTEIN L22-RELATED"/>
    <property type="match status" value="1"/>
</dbReference>
<dbReference type="PANTHER" id="PTHR13501:SF10">
    <property type="entry name" value="LARGE RIBOSOMAL SUBUNIT PROTEIN UL22M"/>
    <property type="match status" value="1"/>
</dbReference>
<dbReference type="Pfam" id="PF00237">
    <property type="entry name" value="Ribosomal_L22"/>
    <property type="match status" value="1"/>
</dbReference>
<dbReference type="SUPFAM" id="SSF54843">
    <property type="entry name" value="Ribosomal protein L22"/>
    <property type="match status" value="1"/>
</dbReference>
<dbReference type="PROSITE" id="PS00464">
    <property type="entry name" value="RIBOSOMAL_L22"/>
    <property type="match status" value="1"/>
</dbReference>
<keyword id="KW-0934">Plastid</keyword>
<keyword id="KW-0687">Ribonucleoprotein</keyword>
<keyword id="KW-0689">Ribosomal protein</keyword>
<keyword id="KW-0694">RNA-binding</keyword>
<keyword id="KW-0699">rRNA-binding</keyword>
<accession>A8W3M1</accession>
<evidence type="ECO:0000250" key="1"/>
<evidence type="ECO:0000305" key="2"/>
<proteinExistence type="inferred from homology"/>
<name>RK22_CUSOB</name>
<comment type="function">
    <text evidence="1">This protein binds specifically to 23S rRNA.</text>
</comment>
<comment type="function">
    <text evidence="1">The globular domain of the protein is located near the polypeptide exit tunnel on the outside of the subunit, while an extended beta-hairpin is found that lines the wall of the exit tunnel in the center of the 70S ribosome.</text>
</comment>
<comment type="subunit">
    <text evidence="1">Part of the 50S ribosomal subunit.</text>
</comment>
<comment type="subcellular location">
    <subcellularLocation>
        <location>Plastid</location>
    </subcellularLocation>
</comment>
<comment type="similarity">
    <text evidence="2">Belongs to the universal ribosomal protein uL22 family.</text>
</comment>
<comment type="caution">
    <text evidence="2">Only inflorescences, fruits, starved seedlings and stressed stem tips are green in this organism.</text>
</comment>
<feature type="chain" id="PRO_0000354569" description="Large ribosomal subunit protein uL22c">
    <location>
        <begin position="1"/>
        <end position="147"/>
    </location>
</feature>
<organism>
    <name type="scientific">Cuscuta obtusiflora</name>
    <name type="common">Peruvian dodder</name>
    <dbReference type="NCBI Taxonomy" id="437280"/>
    <lineage>
        <taxon>Eukaryota</taxon>
        <taxon>Viridiplantae</taxon>
        <taxon>Streptophyta</taxon>
        <taxon>Embryophyta</taxon>
        <taxon>Tracheophyta</taxon>
        <taxon>Spermatophyta</taxon>
        <taxon>Magnoliopsida</taxon>
        <taxon>eudicotyledons</taxon>
        <taxon>Gunneridae</taxon>
        <taxon>Pentapetalae</taxon>
        <taxon>asterids</taxon>
        <taxon>lamiids</taxon>
        <taxon>Solanales</taxon>
        <taxon>Convolvulaceae</taxon>
        <taxon>Cuscuteae</taxon>
        <taxon>Cuscuta</taxon>
        <taxon>Cuscuta subgen. Grammica</taxon>
        <taxon>Cuscuta sect. Cleistogrammica</taxon>
    </lineage>
</organism>
<protein>
    <recommendedName>
        <fullName evidence="2">Large ribosomal subunit protein uL22c</fullName>
    </recommendedName>
    <alternativeName>
        <fullName>50S ribosomal protein L22, plastid</fullName>
    </alternativeName>
</protein>
<geneLocation type="plastid"/>
<reference key="1">
    <citation type="journal article" date="2007" name="BMC Plant Biol.">
        <title>Complete plastid genome sequences suggest strong selection for retention of photosynthetic genes in the parasitic plant genus Cuscuta.</title>
        <authorList>
            <person name="McNeal J.R."/>
            <person name="Kuehl J.V."/>
            <person name="Boore J.L."/>
            <person name="dePamphilis C.W."/>
        </authorList>
    </citation>
    <scope>NUCLEOTIDE SEQUENCE [LARGE SCALE GENOMIC DNA]</scope>
</reference>
<gene>
    <name type="primary">rpl22</name>
</gene>